<sequence>MAVKHYKPVTNGRRNMSSLDYSKNLSGHAPEKSLLVILKKNSGRNNQGKITVRHQGGRVKRYYRIIDFKRNKDDIPATVKSIEYDPNRSANICLLAYADGEKRYILAPEGIKVGQKVVSGNNVDILVGNSLPLSNIPEGTFVHNVEMQPGGGGIIARSAGTSAQILGKDDDGKYVVLRLKSGEMRRILARCRATIGTVGNGEHSLVLLGKAGRSRHLGVRPTVRGSVMNPIDHPHGGGVSKQPIGRKAPLTPWGKKALGVKTRKTKKSSTKLILRRRKDSK</sequence>
<dbReference type="EMBL" id="CU179680">
    <property type="protein sequence ID" value="CAL59242.1"/>
    <property type="molecule type" value="Genomic_DNA"/>
</dbReference>
<dbReference type="RefSeq" id="WP_011949702.1">
    <property type="nucleotide sequence ID" value="NC_009497.1"/>
</dbReference>
<dbReference type="SMR" id="A5IYY3"/>
<dbReference type="STRING" id="347257.MAG5430"/>
<dbReference type="GeneID" id="93358287"/>
<dbReference type="KEGG" id="maa:MAG5430"/>
<dbReference type="HOGENOM" id="CLU_036235_2_1_14"/>
<dbReference type="Proteomes" id="UP000007065">
    <property type="component" value="Chromosome"/>
</dbReference>
<dbReference type="GO" id="GO:0015934">
    <property type="term" value="C:large ribosomal subunit"/>
    <property type="evidence" value="ECO:0007669"/>
    <property type="project" value="InterPro"/>
</dbReference>
<dbReference type="GO" id="GO:0019843">
    <property type="term" value="F:rRNA binding"/>
    <property type="evidence" value="ECO:0007669"/>
    <property type="project" value="UniProtKB-UniRule"/>
</dbReference>
<dbReference type="GO" id="GO:0003735">
    <property type="term" value="F:structural constituent of ribosome"/>
    <property type="evidence" value="ECO:0007669"/>
    <property type="project" value="InterPro"/>
</dbReference>
<dbReference type="GO" id="GO:0016740">
    <property type="term" value="F:transferase activity"/>
    <property type="evidence" value="ECO:0007669"/>
    <property type="project" value="InterPro"/>
</dbReference>
<dbReference type="GO" id="GO:0002181">
    <property type="term" value="P:cytoplasmic translation"/>
    <property type="evidence" value="ECO:0007669"/>
    <property type="project" value="TreeGrafter"/>
</dbReference>
<dbReference type="FunFam" id="2.30.30.30:FF:000001">
    <property type="entry name" value="50S ribosomal protein L2"/>
    <property type="match status" value="1"/>
</dbReference>
<dbReference type="FunFam" id="2.40.50.140:FF:000003">
    <property type="entry name" value="50S ribosomal protein L2"/>
    <property type="match status" value="1"/>
</dbReference>
<dbReference type="FunFam" id="4.10.950.10:FF:000001">
    <property type="entry name" value="50S ribosomal protein L2"/>
    <property type="match status" value="1"/>
</dbReference>
<dbReference type="Gene3D" id="2.30.30.30">
    <property type="match status" value="1"/>
</dbReference>
<dbReference type="Gene3D" id="2.40.50.140">
    <property type="entry name" value="Nucleic acid-binding proteins"/>
    <property type="match status" value="1"/>
</dbReference>
<dbReference type="Gene3D" id="4.10.950.10">
    <property type="entry name" value="Ribosomal protein L2, domain 3"/>
    <property type="match status" value="1"/>
</dbReference>
<dbReference type="HAMAP" id="MF_01320_B">
    <property type="entry name" value="Ribosomal_uL2_B"/>
    <property type="match status" value="1"/>
</dbReference>
<dbReference type="InterPro" id="IPR012340">
    <property type="entry name" value="NA-bd_OB-fold"/>
</dbReference>
<dbReference type="InterPro" id="IPR014722">
    <property type="entry name" value="Rib_uL2_dom2"/>
</dbReference>
<dbReference type="InterPro" id="IPR002171">
    <property type="entry name" value="Ribosomal_uL2"/>
</dbReference>
<dbReference type="InterPro" id="IPR005880">
    <property type="entry name" value="Ribosomal_uL2_bac/org-type"/>
</dbReference>
<dbReference type="InterPro" id="IPR022669">
    <property type="entry name" value="Ribosomal_uL2_C"/>
</dbReference>
<dbReference type="InterPro" id="IPR022671">
    <property type="entry name" value="Ribosomal_uL2_CS"/>
</dbReference>
<dbReference type="InterPro" id="IPR014726">
    <property type="entry name" value="Ribosomal_uL2_dom3"/>
</dbReference>
<dbReference type="InterPro" id="IPR022666">
    <property type="entry name" value="Ribosomal_uL2_RNA-bd_dom"/>
</dbReference>
<dbReference type="InterPro" id="IPR008991">
    <property type="entry name" value="Translation_prot_SH3-like_sf"/>
</dbReference>
<dbReference type="NCBIfam" id="TIGR01171">
    <property type="entry name" value="rplB_bact"/>
    <property type="match status" value="1"/>
</dbReference>
<dbReference type="PANTHER" id="PTHR13691:SF5">
    <property type="entry name" value="LARGE RIBOSOMAL SUBUNIT PROTEIN UL2M"/>
    <property type="match status" value="1"/>
</dbReference>
<dbReference type="PANTHER" id="PTHR13691">
    <property type="entry name" value="RIBOSOMAL PROTEIN L2"/>
    <property type="match status" value="1"/>
</dbReference>
<dbReference type="Pfam" id="PF00181">
    <property type="entry name" value="Ribosomal_L2"/>
    <property type="match status" value="1"/>
</dbReference>
<dbReference type="Pfam" id="PF03947">
    <property type="entry name" value="Ribosomal_L2_C"/>
    <property type="match status" value="1"/>
</dbReference>
<dbReference type="PIRSF" id="PIRSF002158">
    <property type="entry name" value="Ribosomal_L2"/>
    <property type="match status" value="1"/>
</dbReference>
<dbReference type="SMART" id="SM01383">
    <property type="entry name" value="Ribosomal_L2"/>
    <property type="match status" value="1"/>
</dbReference>
<dbReference type="SMART" id="SM01382">
    <property type="entry name" value="Ribosomal_L2_C"/>
    <property type="match status" value="1"/>
</dbReference>
<dbReference type="SUPFAM" id="SSF50249">
    <property type="entry name" value="Nucleic acid-binding proteins"/>
    <property type="match status" value="1"/>
</dbReference>
<dbReference type="SUPFAM" id="SSF50104">
    <property type="entry name" value="Translation proteins SH3-like domain"/>
    <property type="match status" value="1"/>
</dbReference>
<dbReference type="PROSITE" id="PS00467">
    <property type="entry name" value="RIBOSOMAL_L2"/>
    <property type="match status" value="1"/>
</dbReference>
<feature type="chain" id="PRO_1000141584" description="Large ribosomal subunit protein uL2">
    <location>
        <begin position="1"/>
        <end position="281"/>
    </location>
</feature>
<feature type="region of interest" description="Disordered" evidence="2">
    <location>
        <begin position="1"/>
        <end position="23"/>
    </location>
</feature>
<feature type="region of interest" description="Disordered" evidence="2">
    <location>
        <begin position="224"/>
        <end position="281"/>
    </location>
</feature>
<feature type="compositionally biased region" description="Polar residues" evidence="2">
    <location>
        <begin position="12"/>
        <end position="23"/>
    </location>
</feature>
<feature type="compositionally biased region" description="Basic residues" evidence="2">
    <location>
        <begin position="261"/>
        <end position="281"/>
    </location>
</feature>
<proteinExistence type="inferred from homology"/>
<comment type="function">
    <text evidence="1">One of the primary rRNA binding proteins. Required for association of the 30S and 50S subunits to form the 70S ribosome, for tRNA binding and peptide bond formation. It has been suggested to have peptidyltransferase activity; this is somewhat controversial. Makes several contacts with the 16S rRNA in the 70S ribosome.</text>
</comment>
<comment type="subunit">
    <text evidence="1">Part of the 50S ribosomal subunit. Forms a bridge to the 30S subunit in the 70S ribosome.</text>
</comment>
<comment type="similarity">
    <text evidence="1">Belongs to the universal ribosomal protein uL2 family.</text>
</comment>
<protein>
    <recommendedName>
        <fullName evidence="1">Large ribosomal subunit protein uL2</fullName>
    </recommendedName>
    <alternativeName>
        <fullName evidence="3">50S ribosomal protein L2</fullName>
    </alternativeName>
</protein>
<accession>A5IYY3</accession>
<keyword id="KW-1185">Reference proteome</keyword>
<keyword id="KW-0687">Ribonucleoprotein</keyword>
<keyword id="KW-0689">Ribosomal protein</keyword>
<keyword id="KW-0694">RNA-binding</keyword>
<keyword id="KW-0699">rRNA-binding</keyword>
<gene>
    <name evidence="1" type="primary">rplB</name>
    <name type="ordered locus">MAG5430</name>
</gene>
<reference key="1">
    <citation type="journal article" date="2007" name="PLoS Genet.">
        <title>Being pathogenic, plastic, and sexual while living with a nearly minimal bacterial genome.</title>
        <authorList>
            <person name="Sirand-Pugnet P."/>
            <person name="Lartigue C."/>
            <person name="Marenda M."/>
            <person name="Jacob D."/>
            <person name="Barre A."/>
            <person name="Barbe V."/>
            <person name="Schenowitz C."/>
            <person name="Mangenot S."/>
            <person name="Couloux A."/>
            <person name="Segurens B."/>
            <person name="de Daruvar A."/>
            <person name="Blanchard A."/>
            <person name="Citti C."/>
        </authorList>
    </citation>
    <scope>NUCLEOTIDE SEQUENCE [LARGE SCALE GENOMIC DNA]</scope>
    <source>
        <strain>NCTC 10123 / CIP 59.7 / PG2</strain>
    </source>
</reference>
<organism>
    <name type="scientific">Mycoplasmopsis agalactiae (strain NCTC 10123 / CIP 59.7 / PG2)</name>
    <name type="common">Mycoplasma agalactiae</name>
    <dbReference type="NCBI Taxonomy" id="347257"/>
    <lineage>
        <taxon>Bacteria</taxon>
        <taxon>Bacillati</taxon>
        <taxon>Mycoplasmatota</taxon>
        <taxon>Mycoplasmoidales</taxon>
        <taxon>Metamycoplasmataceae</taxon>
        <taxon>Mycoplasmopsis</taxon>
    </lineage>
</organism>
<name>RL2_MYCAP</name>
<evidence type="ECO:0000255" key="1">
    <source>
        <dbReference type="HAMAP-Rule" id="MF_01320"/>
    </source>
</evidence>
<evidence type="ECO:0000256" key="2">
    <source>
        <dbReference type="SAM" id="MobiDB-lite"/>
    </source>
</evidence>
<evidence type="ECO:0000305" key="3"/>